<comment type="function">
    <text evidence="1">Essential for biological clock functions. Determines the period length of circadian and ultradian rhythms; an increase in PER dosage leads to shortened circadian rhythms and a decrease leads to lengthened circadian rhythms. Essential for the circadian rhythmicity of locomotor activity, eclosion behavior, and for the rhythmic component of the male courtship song that originates in the thoracic nervous system. The biological cycle depends on the rhythmic formation and nuclear localization of the TIM-PER complex. Light induces the degradation of TIM, which promotes elimination of PER. Nuclear activity of the heterodimer coordinatively regulates PER and TIM transcription through a negative feedback loop. Behaves as a negative element in circadian transcriptional loop. Does not appear to bind DNA, suggesting indirect transcriptional inhibition (By similarity).</text>
</comment>
<comment type="subunit">
    <text evidence="1">Forms a heterodimer with timeless (TIM); the complex then translocates into the nucleus.</text>
</comment>
<comment type="subcellular location">
    <subcellularLocation>
        <location evidence="1">Nucleus</location>
    </subcellularLocation>
    <subcellularLocation>
        <location evidence="1">Cytoplasm</location>
        <location evidence="1">Perinuclear region</location>
    </subcellularLocation>
    <text evidence="1">Nuclear at specific periods of the day. First accumulates in the perinuclear region about one hour before translocation into the nucleus. Interaction with Tim is required for nuclear localization (By similarity).</text>
</comment>
<comment type="domain">
    <text evidence="1">The run of Gly-Thr is implicated in the maintenance of circadian period at different temperatures. Deletion of the repeat leads to a shortening of the courtship song cycle period, and thus could be important for determining features of species-specific mating behavior (By similarity).</text>
</comment>
<comment type="PTM">
    <text evidence="1">Phosphorylated with a circadian rhythmicity, probably by the double-time protein (dbt). Phosphorylation could be implicated in the stability of per monomer and in the formation of heterodimer per-tim (By similarity).</text>
</comment>
<feature type="chain" id="PRO_0000162615" description="Period circadian protein">
    <location>
        <begin position="1"/>
        <end position="1208"/>
    </location>
</feature>
<feature type="domain" description="PAS 1" evidence="3">
    <location>
        <begin position="242"/>
        <end position="377"/>
    </location>
</feature>
<feature type="domain" description="PAS 2" evidence="3">
    <location>
        <begin position="395"/>
        <end position="501"/>
    </location>
</feature>
<feature type="repeat" description="1">
    <location>
        <begin position="698"/>
        <end position="699"/>
    </location>
</feature>
<feature type="repeat" description="2">
    <location>
        <begin position="701"/>
        <end position="702"/>
    </location>
</feature>
<feature type="repeat" description="3">
    <location>
        <begin position="703"/>
        <end position="704"/>
    </location>
</feature>
<feature type="repeat" description="4">
    <location>
        <begin position="705"/>
        <end position="706"/>
    </location>
</feature>
<feature type="repeat" description="5">
    <location>
        <begin position="707"/>
        <end position="708"/>
    </location>
</feature>
<feature type="repeat" description="6">
    <location>
        <begin position="709"/>
        <end position="710"/>
    </location>
</feature>
<feature type="repeat" description="7">
    <location>
        <begin position="711"/>
        <end position="712"/>
    </location>
</feature>
<feature type="repeat" description="8">
    <location>
        <begin position="713"/>
        <end position="714"/>
    </location>
</feature>
<feature type="repeat" description="9">
    <location>
        <begin position="715"/>
        <end position="716"/>
    </location>
</feature>
<feature type="repeat" description="10">
    <location>
        <begin position="717"/>
        <end position="718"/>
    </location>
</feature>
<feature type="repeat" description="11">
    <location>
        <begin position="719"/>
        <end position="720"/>
    </location>
</feature>
<feature type="repeat" description="12">
    <location>
        <begin position="721"/>
        <end position="722"/>
    </location>
</feature>
<feature type="repeat" description="13">
    <location>
        <begin position="723"/>
        <end position="724"/>
    </location>
</feature>
<feature type="repeat" description="14">
    <location>
        <begin position="725"/>
        <end position="726"/>
    </location>
</feature>
<feature type="repeat" description="15">
    <location>
        <begin position="727"/>
        <end position="728"/>
    </location>
</feature>
<feature type="repeat" description="16">
    <location>
        <begin position="729"/>
        <end position="730"/>
    </location>
</feature>
<feature type="repeat" description="17">
    <location>
        <begin position="731"/>
        <end position="732"/>
    </location>
</feature>
<feature type="repeat" description="18; approximate">
    <location>
        <begin position="734"/>
        <end position="735"/>
    </location>
</feature>
<feature type="repeat" description="19">
    <location>
        <begin position="737"/>
        <end position="738"/>
    </location>
</feature>
<feature type="repeat" description="20">
    <location>
        <begin position="739"/>
        <end position="740"/>
    </location>
</feature>
<feature type="repeat" description="21; approximate">
    <location>
        <begin position="741"/>
        <end position="742"/>
    </location>
</feature>
<feature type="region of interest" description="Disordered" evidence="4">
    <location>
        <begin position="1"/>
        <end position="171"/>
    </location>
</feature>
<feature type="region of interest" description="Disordered" evidence="4">
    <location>
        <begin position="214"/>
        <end position="235"/>
    </location>
</feature>
<feature type="region of interest" description="Disordered" evidence="4">
    <location>
        <begin position="636"/>
        <end position="747"/>
    </location>
</feature>
<feature type="region of interest" description="21 X 2 AA approximate tandem repeats of G-[TN]">
    <location>
        <begin position="698"/>
        <end position="742"/>
    </location>
</feature>
<feature type="region of interest" description="Disordered" evidence="4">
    <location>
        <begin position="802"/>
        <end position="821"/>
    </location>
</feature>
<feature type="region of interest" description="Disordered" evidence="4">
    <location>
        <begin position="961"/>
        <end position="982"/>
    </location>
</feature>
<feature type="region of interest" description="Disordered" evidence="4">
    <location>
        <begin position="1076"/>
        <end position="1208"/>
    </location>
</feature>
<feature type="short sequence motif" description="Nuclear localization signal" evidence="2">
    <location>
        <begin position="66"/>
        <end position="79"/>
    </location>
</feature>
<feature type="compositionally biased region" description="Low complexity" evidence="4">
    <location>
        <begin position="16"/>
        <end position="47"/>
    </location>
</feature>
<feature type="compositionally biased region" description="Basic residues" evidence="4">
    <location>
        <begin position="66"/>
        <end position="79"/>
    </location>
</feature>
<feature type="compositionally biased region" description="Basic and acidic residues" evidence="4">
    <location>
        <begin position="129"/>
        <end position="139"/>
    </location>
</feature>
<feature type="compositionally biased region" description="Basic and acidic residues" evidence="4">
    <location>
        <begin position="147"/>
        <end position="164"/>
    </location>
</feature>
<feature type="compositionally biased region" description="Low complexity" evidence="4">
    <location>
        <begin position="217"/>
        <end position="232"/>
    </location>
</feature>
<feature type="compositionally biased region" description="Polar residues" evidence="4">
    <location>
        <begin position="679"/>
        <end position="697"/>
    </location>
</feature>
<feature type="compositionally biased region" description="Gly residues" evidence="4">
    <location>
        <begin position="698"/>
        <end position="740"/>
    </location>
</feature>
<feature type="compositionally biased region" description="Low complexity" evidence="4">
    <location>
        <begin position="1076"/>
        <end position="1092"/>
    </location>
</feature>
<feature type="compositionally biased region" description="Polar residues" evidence="4">
    <location>
        <begin position="1127"/>
        <end position="1138"/>
    </location>
</feature>
<feature type="compositionally biased region" description="Low complexity" evidence="4">
    <location>
        <begin position="1142"/>
        <end position="1161"/>
    </location>
</feature>
<feature type="compositionally biased region" description="Basic and acidic residues" evidence="4">
    <location>
        <begin position="1193"/>
        <end position="1208"/>
    </location>
</feature>
<feature type="sequence conflict" description="In Ref. 2; AAB25029." evidence="5" ref="2">
    <original>S</original>
    <variation>T</variation>
    <location>
        <position position="742"/>
    </location>
</feature>
<feature type="sequence conflict" description="In Ref. 2." evidence="5" ref="2">
    <original>S</original>
    <variation>G</variation>
    <location>
        <position position="751"/>
    </location>
</feature>
<feature type="sequence conflict" description="In Ref. 2." evidence="5" ref="2">
    <original>A</original>
    <variation>S</variation>
    <location>
        <position position="762"/>
    </location>
</feature>
<protein>
    <recommendedName>
        <fullName>Period circadian protein</fullName>
    </recommendedName>
</protein>
<proteinExistence type="inferred from homology"/>
<dbReference type="EMBL" id="X61127">
    <property type="protein sequence ID" value="CAA43439.1"/>
    <property type="molecule type" value="Genomic_DNA"/>
</dbReference>
<dbReference type="EMBL" id="S53298">
    <property type="protein sequence ID" value="AAB25029.2"/>
    <property type="molecule type" value="Genomic_DNA"/>
</dbReference>
<dbReference type="PIR" id="S17286">
    <property type="entry name" value="S17286"/>
</dbReference>
<dbReference type="SMR" id="Q24767"/>
<dbReference type="eggNOG" id="KOG3753">
    <property type="taxonomic scope" value="Eukaryota"/>
</dbReference>
<dbReference type="OrthoDB" id="7788983at2759"/>
<dbReference type="GO" id="GO:0005634">
    <property type="term" value="C:nucleus"/>
    <property type="evidence" value="ECO:0007669"/>
    <property type="project" value="UniProtKB-SubCell"/>
</dbReference>
<dbReference type="GO" id="GO:0048471">
    <property type="term" value="C:perinuclear region of cytoplasm"/>
    <property type="evidence" value="ECO:0007669"/>
    <property type="project" value="UniProtKB-SubCell"/>
</dbReference>
<dbReference type="GO" id="GO:0000976">
    <property type="term" value="F:transcription cis-regulatory region binding"/>
    <property type="evidence" value="ECO:0007669"/>
    <property type="project" value="TreeGrafter"/>
</dbReference>
<dbReference type="GO" id="GO:0001222">
    <property type="term" value="F:transcription corepressor binding"/>
    <property type="evidence" value="ECO:0007669"/>
    <property type="project" value="TreeGrafter"/>
</dbReference>
<dbReference type="GO" id="GO:0032922">
    <property type="term" value="P:circadian regulation of gene expression"/>
    <property type="evidence" value="ECO:0007669"/>
    <property type="project" value="TreeGrafter"/>
</dbReference>
<dbReference type="GO" id="GO:0043153">
    <property type="term" value="P:entrainment of circadian clock by photoperiod"/>
    <property type="evidence" value="ECO:0007669"/>
    <property type="project" value="TreeGrafter"/>
</dbReference>
<dbReference type="GO" id="GO:0000122">
    <property type="term" value="P:negative regulation of transcription by RNA polymerase II"/>
    <property type="evidence" value="ECO:0007669"/>
    <property type="project" value="TreeGrafter"/>
</dbReference>
<dbReference type="CDD" id="cd00130">
    <property type="entry name" value="PAS"/>
    <property type="match status" value="2"/>
</dbReference>
<dbReference type="FunFam" id="1.20.5.770:FF:000001">
    <property type="entry name" value="Period circadian protein"/>
    <property type="match status" value="1"/>
</dbReference>
<dbReference type="FunFam" id="3.30.450.20:FF:000066">
    <property type="entry name" value="Period circadian protein"/>
    <property type="match status" value="1"/>
</dbReference>
<dbReference type="FunFam" id="3.30.450.20:FF:000072">
    <property type="entry name" value="Period circadian protein"/>
    <property type="match status" value="1"/>
</dbReference>
<dbReference type="Gene3D" id="3.30.450.20">
    <property type="entry name" value="PAS domain"/>
    <property type="match status" value="2"/>
</dbReference>
<dbReference type="Gene3D" id="1.20.5.770">
    <property type="entry name" value="Single helix bin"/>
    <property type="match status" value="1"/>
</dbReference>
<dbReference type="InterPro" id="IPR000014">
    <property type="entry name" value="PAS"/>
</dbReference>
<dbReference type="InterPro" id="IPR035965">
    <property type="entry name" value="PAS-like_dom_sf"/>
</dbReference>
<dbReference type="InterPro" id="IPR013767">
    <property type="entry name" value="PAS_fold"/>
</dbReference>
<dbReference type="InterPro" id="IPR050760">
    <property type="entry name" value="Period_circadian_regulator"/>
</dbReference>
<dbReference type="PANTHER" id="PTHR11269">
    <property type="entry name" value="PERIOD CIRCADIAN PROTEIN"/>
    <property type="match status" value="1"/>
</dbReference>
<dbReference type="PANTHER" id="PTHR11269:SF16">
    <property type="entry name" value="PERIOD CIRCADIAN PROTEIN"/>
    <property type="match status" value="1"/>
</dbReference>
<dbReference type="Pfam" id="PF00989">
    <property type="entry name" value="PAS"/>
    <property type="match status" value="1"/>
</dbReference>
<dbReference type="Pfam" id="PF14598">
    <property type="entry name" value="PAS_11"/>
    <property type="match status" value="1"/>
</dbReference>
<dbReference type="SMART" id="SM00091">
    <property type="entry name" value="PAS"/>
    <property type="match status" value="2"/>
</dbReference>
<dbReference type="SUPFAM" id="SSF55785">
    <property type="entry name" value="PYP-like sensor domain (PAS domain)"/>
    <property type="match status" value="2"/>
</dbReference>
<dbReference type="PROSITE" id="PS50112">
    <property type="entry name" value="PAS"/>
    <property type="match status" value="2"/>
</dbReference>
<keyword id="KW-0090">Biological rhythms</keyword>
<keyword id="KW-0963">Cytoplasm</keyword>
<keyword id="KW-0539">Nucleus</keyword>
<keyword id="KW-0597">Phosphoprotein</keyword>
<keyword id="KW-0677">Repeat</keyword>
<evidence type="ECO:0000250" key="1"/>
<evidence type="ECO:0000255" key="2"/>
<evidence type="ECO:0000255" key="3">
    <source>
        <dbReference type="PROSITE-ProRule" id="PRU00140"/>
    </source>
</evidence>
<evidence type="ECO:0000256" key="4">
    <source>
        <dbReference type="SAM" id="MobiDB-lite"/>
    </source>
</evidence>
<evidence type="ECO:0000305" key="5"/>
<name>PER_DROYA</name>
<gene>
    <name type="primary">per</name>
</gene>
<reference key="1">
    <citation type="journal article" date="1990" name="J. Mol. Evol.">
        <title>Molecular evolution in the Drosophila yakuba period locus.</title>
        <authorList>
            <person name="Thackeray J.R."/>
            <person name="Kyriacou C.P."/>
        </authorList>
    </citation>
    <scope>NUCLEOTIDE SEQUENCE [GENOMIC DNA]</scope>
</reference>
<reference key="2">
    <citation type="journal article" date="1992" name="J. Mol. Evol.">
        <title>Evolution of the threonine-glycine repeat region of the period gene in the melanogaster species subgroup of Drosophila.</title>
        <authorList>
            <person name="Peixoto A.A."/>
            <person name="Costa R."/>
            <person name="Wheeler D.A."/>
            <person name="Hall J.C."/>
            <person name="Kyriacou C.P."/>
        </authorList>
    </citation>
    <scope>NUCLEOTIDE SEQUENCE [GENOMIC DNA] OF 669-766</scope>
</reference>
<accession>Q24767</accession>
<accession>Q26286</accession>
<organism>
    <name type="scientific">Drosophila yakuba</name>
    <name type="common">Fruit fly</name>
    <dbReference type="NCBI Taxonomy" id="7245"/>
    <lineage>
        <taxon>Eukaryota</taxon>
        <taxon>Metazoa</taxon>
        <taxon>Ecdysozoa</taxon>
        <taxon>Arthropoda</taxon>
        <taxon>Hexapoda</taxon>
        <taxon>Insecta</taxon>
        <taxon>Pterygota</taxon>
        <taxon>Neoptera</taxon>
        <taxon>Endopterygota</taxon>
        <taxon>Diptera</taxon>
        <taxon>Brachycera</taxon>
        <taxon>Muscomorpha</taxon>
        <taxon>Ephydroidea</taxon>
        <taxon>Drosophilidae</taxon>
        <taxon>Drosophila</taxon>
        <taxon>Sophophora</taxon>
    </lineage>
</organism>
<sequence>MEGGESAESTHNTKVSDSAYSNSCSNSQSQRSGSSKSRLSGSHSSGSSGYGGKPSTQASSSDMIIKRNKDKSRKKKKNKGAGQGAGQAGQSLISASTSLEGGAEEKPRPSGSGCGVEQQSCRELLQDQQHGEDHSEPKATEQLQQEEGDRSGSESEAERVENAAKSEAAQSFPIPSPLSVTIVPPSMGGCAGVGHAASLDSGLAKLDKTWEAGGPGKVEPVPGVPGTAAAGTGQRGERLKEESFCCVISMHDGIVLYTTPSITDVLGYPRDMWLGRSFIDFVHLKDRATFASQITTGIPIAESRGSVPKDTKSTFCVMLRRYRGLKSGGFGVIGRPVSYEPFRLGLTFREAPEEARPDNYMVSNGTNMLLVICATPIKSSYKIPDEILSQKSPKFAIRHTATGIISHVDSAAVSALGYLPQDLIGRSIMDFYHQEDLSVMKETYEMVMKKGQTAGASFCSKPYRFLIQNGCYVLLETEWTSFVNPWSRKLEFVVGHHRVFQGPKSCNVFEAAPTCKLKMSEEAQSRNTRIKEDIVKRLAETVSRPSDTVKQEVSRRCQALASFMETLMDEVSRADLKLELPHENELTVSERDSVMLGEISPHHDYYDSKSSTETPPSYNQLNYNENLLRFFNSKPVTAPAELDPPKTEPPEPRGTCVSGASGPMSPVHEGSGGSGSSGNFTTASNIHMSSVTNTSIAGTGGTGTGTGTGTGTGTGTGTGTGTGTGTGTGTGNGTNSGTGTGSASSNYRGGSVAIQPVTLTEALLNKHNDEMEKFMLKKHRESRGRSGEKSKKSATDTLKMLEYSGPGHGIKRGGSHSWEGEANKPKQQLTLGTDAIKGVVGGSGGVVGTGGGAGVAGGGGTGTGLAGTSDGRLTMSSGAGGVVGGPGGAAAAAGVISSVGSSMPGPSSYPTCTQNINLWPPFSVGITPPVHSTHTAMAQSSFSSAGLFPTFYYIPASLTPTSPTRSPRMHKHPHKGGPEMPTTSQQAAAAAAQAAQAMPLQYMAGVMYPHPSLFYTHPAAAAATAMMYQPMPFTGMTNALQIPERPLGSQSAYNKSMYTTTPPSMAKKVPGAFHSVTTPSQVQRSSSQSASVNAEPGCSASVSDPCKKEAPGSSPIPSVMGDYNSELPCSSSNPANNKKYTDSNGNSDDMDGSSFSSFYSSFIKTTDGSESPPDIEKDPKHRKLKSMSPSDSKIMEHPEEDQTQHGDG</sequence>